<keyword id="KW-0472">Membrane</keyword>
<keyword id="KW-0496">Mitochondrion</keyword>
<keyword id="KW-0999">Mitochondrion inner membrane</keyword>
<keyword id="KW-1185">Reference proteome</keyword>
<keyword id="KW-0812">Transmembrane</keyword>
<keyword id="KW-1133">Transmembrane helix</keyword>
<dbReference type="EMBL" id="BC091193">
    <property type="protein sequence ID" value="AAH91193.1"/>
    <property type="molecule type" value="mRNA"/>
</dbReference>
<dbReference type="RefSeq" id="NP_001091710.1">
    <property type="nucleotide sequence ID" value="NM_001098240.1"/>
</dbReference>
<dbReference type="RefSeq" id="XP_038968368.1">
    <property type="nucleotide sequence ID" value="XM_039112440.2"/>
</dbReference>
<dbReference type="RefSeq" id="XP_038968369.1">
    <property type="nucleotide sequence ID" value="XM_039112441.2"/>
</dbReference>
<dbReference type="RefSeq" id="XP_038968371.1">
    <property type="nucleotide sequence ID" value="XM_039112443.2"/>
</dbReference>
<dbReference type="FunCoup" id="Q5BK62">
    <property type="interactions" value="816"/>
</dbReference>
<dbReference type="STRING" id="10116.ENSRNOP00000037647"/>
<dbReference type="PhosphoSitePlus" id="Q5BK62"/>
<dbReference type="SwissPalm" id="Q5BK62"/>
<dbReference type="PaxDb" id="10116-ENSRNOP00000037647"/>
<dbReference type="GeneID" id="360463"/>
<dbReference type="KEGG" id="rno:360463"/>
<dbReference type="AGR" id="RGD:1310512"/>
<dbReference type="CTD" id="4358"/>
<dbReference type="RGD" id="1310512">
    <property type="gene designation" value="Mpv17"/>
</dbReference>
<dbReference type="eggNOG" id="KOG1944">
    <property type="taxonomic scope" value="Eukaryota"/>
</dbReference>
<dbReference type="InParanoid" id="Q5BK62"/>
<dbReference type="Reactome" id="R-RNO-9033241">
    <property type="pathway name" value="Peroxisomal protein import"/>
</dbReference>
<dbReference type="PRO" id="PR:Q5BK62"/>
<dbReference type="Proteomes" id="UP000002494">
    <property type="component" value="Unplaced"/>
</dbReference>
<dbReference type="GO" id="GO:0005737">
    <property type="term" value="C:cytoplasm"/>
    <property type="evidence" value="ECO:0000318"/>
    <property type="project" value="GO_Central"/>
</dbReference>
<dbReference type="GO" id="GO:0005743">
    <property type="term" value="C:mitochondrial inner membrane"/>
    <property type="evidence" value="ECO:0000266"/>
    <property type="project" value="RGD"/>
</dbReference>
<dbReference type="GO" id="GO:0005739">
    <property type="term" value="C:mitochondrion"/>
    <property type="evidence" value="ECO:0000266"/>
    <property type="project" value="RGD"/>
</dbReference>
<dbReference type="GO" id="GO:0005777">
    <property type="term" value="C:peroxisome"/>
    <property type="evidence" value="ECO:0000266"/>
    <property type="project" value="RGD"/>
</dbReference>
<dbReference type="GO" id="GO:0015267">
    <property type="term" value="F:channel activity"/>
    <property type="evidence" value="ECO:0000250"/>
    <property type="project" value="UniProtKB"/>
</dbReference>
<dbReference type="GO" id="GO:0034614">
    <property type="term" value="P:cellular response to reactive oxygen species"/>
    <property type="evidence" value="ECO:0000266"/>
    <property type="project" value="RGD"/>
</dbReference>
<dbReference type="GO" id="GO:0032836">
    <property type="term" value="P:glomerular basement membrane development"/>
    <property type="evidence" value="ECO:0000266"/>
    <property type="project" value="RGD"/>
</dbReference>
<dbReference type="GO" id="GO:0042592">
    <property type="term" value="P:homeostatic process"/>
    <property type="evidence" value="ECO:0000266"/>
    <property type="project" value="RGD"/>
</dbReference>
<dbReference type="GO" id="GO:0048839">
    <property type="term" value="P:inner ear development"/>
    <property type="evidence" value="ECO:0000266"/>
    <property type="project" value="RGD"/>
</dbReference>
<dbReference type="GO" id="GO:0000002">
    <property type="term" value="P:mitochondrial genome maintenance"/>
    <property type="evidence" value="ECO:0000266"/>
    <property type="project" value="RGD"/>
</dbReference>
<dbReference type="GO" id="GO:0072593">
    <property type="term" value="P:reactive oxygen species metabolic process"/>
    <property type="evidence" value="ECO:0000266"/>
    <property type="project" value="RGD"/>
</dbReference>
<dbReference type="GO" id="GO:1901858">
    <property type="term" value="P:regulation of mitochondrial DNA metabolic process"/>
    <property type="evidence" value="ECO:0000250"/>
    <property type="project" value="UniProtKB"/>
</dbReference>
<dbReference type="GO" id="GO:2000377">
    <property type="term" value="P:regulation of reactive oxygen species metabolic process"/>
    <property type="evidence" value="ECO:0000266"/>
    <property type="project" value="RGD"/>
</dbReference>
<dbReference type="GO" id="GO:0007605">
    <property type="term" value="P:sensory perception of sound"/>
    <property type="evidence" value="ECO:0000266"/>
    <property type="project" value="RGD"/>
</dbReference>
<dbReference type="InterPro" id="IPR007248">
    <property type="entry name" value="Mpv17_PMP22"/>
</dbReference>
<dbReference type="PANTHER" id="PTHR11266">
    <property type="entry name" value="PEROXISOMAL MEMBRANE PROTEIN 2, PXMP2 MPV17"/>
    <property type="match status" value="1"/>
</dbReference>
<dbReference type="PANTHER" id="PTHR11266:SF17">
    <property type="entry name" value="PROTEIN MPV17"/>
    <property type="match status" value="1"/>
</dbReference>
<dbReference type="Pfam" id="PF04117">
    <property type="entry name" value="Mpv17_PMP22"/>
    <property type="match status" value="1"/>
</dbReference>
<proteinExistence type="evidence at transcript level"/>
<gene>
    <name evidence="6" type="primary">Mpv17</name>
    <name type="synonym">Mpv17l</name>
</gene>
<sequence>MALWRAYQRALAAHPWKVQVLTAGSLMGLGDIISQQLVERRGLQQHQTGRTLTMASLGCGFVGPVVGGWYRVLDHLIPGTTKVNALKKMLLDQGGFAPCFLGCFLPLVGVLNGMSAQDNWAKLKRDYPDALITNYYLWPAVQLANFYLVPLHYRLAVVQCVAVVWNSYLSWKAHQL</sequence>
<evidence type="ECO:0000250" key="1">
    <source>
        <dbReference type="UniProtKB" id="P19258"/>
    </source>
</evidence>
<evidence type="ECO:0000250" key="2">
    <source>
        <dbReference type="UniProtKB" id="P39210"/>
    </source>
</evidence>
<evidence type="ECO:0000255" key="3"/>
<evidence type="ECO:0000305" key="4"/>
<evidence type="ECO:0000312" key="5">
    <source>
        <dbReference type="Proteomes" id="UP000002494"/>
    </source>
</evidence>
<evidence type="ECO:0000312" key="6">
    <source>
        <dbReference type="RGD" id="1310512"/>
    </source>
</evidence>
<feature type="chain" id="PRO_0000234399" description="Mitochondrial inner membrane protein Mpv17">
    <location>
        <begin position="1"/>
        <end position="176"/>
    </location>
</feature>
<feature type="transmembrane region" description="Helical" evidence="3">
    <location>
        <begin position="18"/>
        <end position="38"/>
    </location>
</feature>
<feature type="transmembrane region" description="Helical" evidence="3">
    <location>
        <begin position="57"/>
        <end position="77"/>
    </location>
</feature>
<feature type="transmembrane region" description="Helical" evidence="3">
    <location>
        <begin position="94"/>
        <end position="114"/>
    </location>
</feature>
<feature type="transmembrane region" description="Helical" evidence="3">
    <location>
        <begin position="131"/>
        <end position="151"/>
    </location>
</feature>
<feature type="site" description="Determines ion selectivity" evidence="2">
    <location>
        <position position="92"/>
    </location>
</feature>
<comment type="function">
    <text evidence="1 2">Non-selective channel that modulates the membrane potential under normal conditions and oxidative stress, and is involved in mitochondrial homeostasis. Involved in mitochondrial deoxynucleoside triphosphates (dNTP) pool homeostasis and mitochondrial DNA (mtDNA) maintenance (By similarity). May be involved in the regulation of reactive oxygen species metabolism and the control of oxidative phosphorylation (By similarity).</text>
</comment>
<comment type="subcellular location">
    <subcellularLocation>
        <location evidence="2">Mitochondrion inner membrane</location>
        <topology evidence="2">Multi-pass membrane protein</topology>
    </subcellularLocation>
</comment>
<comment type="similarity">
    <text evidence="4">Belongs to the peroxisomal membrane protein PXMP2/4 family.</text>
</comment>
<accession>Q5BK62</accession>
<organism evidence="5">
    <name type="scientific">Rattus norvegicus</name>
    <name type="common">Rat</name>
    <dbReference type="NCBI Taxonomy" id="10116"/>
    <lineage>
        <taxon>Eukaryota</taxon>
        <taxon>Metazoa</taxon>
        <taxon>Chordata</taxon>
        <taxon>Craniata</taxon>
        <taxon>Vertebrata</taxon>
        <taxon>Euteleostomi</taxon>
        <taxon>Mammalia</taxon>
        <taxon>Eutheria</taxon>
        <taxon>Euarchontoglires</taxon>
        <taxon>Glires</taxon>
        <taxon>Rodentia</taxon>
        <taxon>Myomorpha</taxon>
        <taxon>Muroidea</taxon>
        <taxon>Muridae</taxon>
        <taxon>Murinae</taxon>
        <taxon>Rattus</taxon>
    </lineage>
</organism>
<name>MPV17_RAT</name>
<protein>
    <recommendedName>
        <fullName evidence="6">Mitochondrial inner membrane protein Mpv17</fullName>
    </recommendedName>
    <alternativeName>
        <fullName>Protein Mpv17</fullName>
    </alternativeName>
</protein>
<reference key="1">
    <citation type="journal article" date="2004" name="Genome Res.">
        <title>The status, quality, and expansion of the NIH full-length cDNA project: the Mammalian Gene Collection (MGC).</title>
        <authorList>
            <consortium name="The MGC Project Team"/>
        </authorList>
    </citation>
    <scope>NUCLEOTIDE SEQUENCE [LARGE SCALE MRNA]</scope>
    <source>
        <tissue>Spleen</tissue>
    </source>
</reference>